<proteinExistence type="evidence at protein level"/>
<feature type="signal peptide" evidence="2">
    <location>
        <begin position="1"/>
        <end position="21"/>
    </location>
</feature>
<feature type="propeptide" id="PRO_0000001613">
    <location>
        <begin position="22"/>
        <end status="unknown"/>
    </location>
</feature>
<feature type="peptide" id="PRO_0000001614" description="Ventricular natriuretic peptide">
    <location>
        <begin position="115"/>
        <end position="150"/>
    </location>
</feature>
<feature type="region of interest" description="Disordered" evidence="3">
    <location>
        <begin position="52"/>
        <end position="75"/>
    </location>
</feature>
<feature type="disulfide bond" evidence="1">
    <location>
        <begin position="120"/>
        <end position="136"/>
    </location>
</feature>
<reference key="1">
    <citation type="journal article" date="1994" name="J. Mol. Endocrinol.">
        <title>Eel ventricular natriuretic peptide: cDNA cloning and mRNA expression.</title>
        <authorList>
            <person name="Takei Y."/>
            <person name="Ueki M."/>
            <person name="Nishizawa T."/>
        </authorList>
    </citation>
    <scope>NUCLEOTIDE SEQUENCE [MRNA]</scope>
    <scope>TISSUE SPECIFICITY</scope>
    <source>
        <tissue>Heart ventricle</tissue>
    </source>
</reference>
<reference key="2">
    <citation type="journal article" date="1991" name="FEBS Lett.">
        <title>A novel natriuretic peptide isolated from eel cardiac ventricles.</title>
        <authorList>
            <person name="Takei Y."/>
            <person name="Takahashi A."/>
            <person name="Watanabe T.X."/>
            <person name="Nakajima K."/>
            <person name="Sakakibara S."/>
        </authorList>
    </citation>
    <scope>PROTEIN SEQUENCE OF 115-150</scope>
    <scope>FUNCTION</scope>
    <source>
        <tissue>Heart ventricle</tissue>
    </source>
</reference>
<comment type="function">
    <text evidence="4">Exhibits natriuretic and vasodepressor activity.</text>
</comment>
<comment type="subcellular location">
    <subcellularLocation>
        <location>Secreted</location>
    </subcellularLocation>
</comment>
<comment type="tissue specificity">
    <text evidence="5">Heart ventricle, and to a lower extent in heart atrium.</text>
</comment>
<comment type="similarity">
    <text evidence="6">Belongs to the natriuretic peptide family.</text>
</comment>
<gene>
    <name type="primary">vnp</name>
</gene>
<evidence type="ECO:0000250" key="1"/>
<evidence type="ECO:0000255" key="2"/>
<evidence type="ECO:0000256" key="3">
    <source>
        <dbReference type="SAM" id="MobiDB-lite"/>
    </source>
</evidence>
<evidence type="ECO:0000269" key="4">
    <source>
    </source>
</evidence>
<evidence type="ECO:0000269" key="5">
    <source>
    </source>
</evidence>
<evidence type="ECO:0000305" key="6"/>
<accession>P22642</accession>
<accession>Q9PSV2</accession>
<keyword id="KW-0903">Direct protein sequencing</keyword>
<keyword id="KW-1015">Disulfide bond</keyword>
<keyword id="KW-0372">Hormone</keyword>
<keyword id="KW-0964">Secreted</keyword>
<keyword id="KW-0732">Signal</keyword>
<keyword id="KW-0838">Vasoactive</keyword>
<name>ANFV_ANGJA</name>
<organism>
    <name type="scientific">Anguilla japonica</name>
    <name type="common">Japanese eel</name>
    <dbReference type="NCBI Taxonomy" id="7937"/>
    <lineage>
        <taxon>Eukaryota</taxon>
        <taxon>Metazoa</taxon>
        <taxon>Chordata</taxon>
        <taxon>Craniata</taxon>
        <taxon>Vertebrata</taxon>
        <taxon>Euteleostomi</taxon>
        <taxon>Actinopterygii</taxon>
        <taxon>Neopterygii</taxon>
        <taxon>Teleostei</taxon>
        <taxon>Anguilliformes</taxon>
        <taxon>Anguillidae</taxon>
        <taxon>Anguilla</taxon>
    </lineage>
</organism>
<dbReference type="EMBL" id="AB019371">
    <property type="protein sequence ID" value="BAA34121.1"/>
    <property type="molecule type" value="mRNA"/>
</dbReference>
<dbReference type="PIR" id="S15821">
    <property type="entry name" value="S15821"/>
</dbReference>
<dbReference type="SMR" id="P22642"/>
<dbReference type="GO" id="GO:0005737">
    <property type="term" value="C:cytoplasm"/>
    <property type="evidence" value="ECO:0007669"/>
    <property type="project" value="TreeGrafter"/>
</dbReference>
<dbReference type="GO" id="GO:0005615">
    <property type="term" value="C:extracellular space"/>
    <property type="evidence" value="ECO:0007669"/>
    <property type="project" value="TreeGrafter"/>
</dbReference>
<dbReference type="GO" id="GO:0005179">
    <property type="term" value="F:hormone activity"/>
    <property type="evidence" value="ECO:0007669"/>
    <property type="project" value="UniProtKB-KW"/>
</dbReference>
<dbReference type="GO" id="GO:0051427">
    <property type="term" value="F:hormone receptor binding"/>
    <property type="evidence" value="ECO:0007669"/>
    <property type="project" value="TreeGrafter"/>
</dbReference>
<dbReference type="GO" id="GO:0097746">
    <property type="term" value="P:blood vessel diameter maintenance"/>
    <property type="evidence" value="ECO:0007669"/>
    <property type="project" value="UniProtKB-KW"/>
</dbReference>
<dbReference type="GO" id="GO:0006182">
    <property type="term" value="P:cGMP biosynthetic process"/>
    <property type="evidence" value="ECO:0007669"/>
    <property type="project" value="TreeGrafter"/>
</dbReference>
<dbReference type="GO" id="GO:0019934">
    <property type="term" value="P:cGMP-mediated signaling"/>
    <property type="evidence" value="ECO:0007669"/>
    <property type="project" value="TreeGrafter"/>
</dbReference>
<dbReference type="GO" id="GO:0003085">
    <property type="term" value="P:negative regulation of systemic arterial blood pressure"/>
    <property type="evidence" value="ECO:0007669"/>
    <property type="project" value="TreeGrafter"/>
</dbReference>
<dbReference type="GO" id="GO:0007218">
    <property type="term" value="P:neuropeptide signaling pathway"/>
    <property type="evidence" value="ECO:0007669"/>
    <property type="project" value="TreeGrafter"/>
</dbReference>
<dbReference type="GO" id="GO:0007168">
    <property type="term" value="P:receptor guanylyl cyclase signaling pathway"/>
    <property type="evidence" value="ECO:0007669"/>
    <property type="project" value="TreeGrafter"/>
</dbReference>
<dbReference type="InterPro" id="IPR000663">
    <property type="entry name" value="Natr_peptide"/>
</dbReference>
<dbReference type="InterPro" id="IPR030480">
    <property type="entry name" value="Natr_peptide_CS"/>
</dbReference>
<dbReference type="InterPro" id="IPR050787">
    <property type="entry name" value="Natriuretic_peptide"/>
</dbReference>
<dbReference type="InterPro" id="IPR002407">
    <property type="entry name" value="Natriuretic_peptide_atrial"/>
</dbReference>
<dbReference type="PANTHER" id="PTHR14066">
    <property type="entry name" value="ATRIAL NATRIURETIC FACTOR PRECURSOR"/>
    <property type="match status" value="1"/>
</dbReference>
<dbReference type="PANTHER" id="PTHR14066:SF10">
    <property type="entry name" value="NATRIURETIC PEPTIDES B"/>
    <property type="match status" value="1"/>
</dbReference>
<dbReference type="Pfam" id="PF00212">
    <property type="entry name" value="ANP"/>
    <property type="match status" value="1"/>
</dbReference>
<dbReference type="PRINTS" id="PR00711">
    <property type="entry name" value="ANATPEPTIDE"/>
</dbReference>
<dbReference type="SMART" id="SM00183">
    <property type="entry name" value="NAT_PEP"/>
    <property type="match status" value="1"/>
</dbReference>
<dbReference type="PROSITE" id="PS00263">
    <property type="entry name" value="NATRIURETIC_PEPTIDE"/>
    <property type="match status" value="1"/>
</dbReference>
<protein>
    <recommendedName>
        <fullName>Ventricular natriuretic peptide</fullName>
        <shortName>VNP</shortName>
    </recommendedName>
</protein>
<sequence length="150" mass="16735">MAKSGIYLGCFILILIQNMVAANPLFNRNNVQELENLKDLIHQLEERVAVNEEPEVYPESEDMKMDAEEEDAGISPGALRQSEENLLMNIVDRIAPESPLRSRFRDLAGLAKTAKSFNSCFGTRMDRIGSWSGLGCNSLKNGTKKKIFGN</sequence>